<gene>
    <name evidence="1" type="primary">hisA</name>
    <name type="ordered locus">RALTA_A2870</name>
</gene>
<keyword id="KW-0028">Amino-acid biosynthesis</keyword>
<keyword id="KW-0963">Cytoplasm</keyword>
<keyword id="KW-0368">Histidine biosynthesis</keyword>
<keyword id="KW-0413">Isomerase</keyword>
<evidence type="ECO:0000255" key="1">
    <source>
        <dbReference type="HAMAP-Rule" id="MF_01014"/>
    </source>
</evidence>
<proteinExistence type="inferred from homology"/>
<comment type="catalytic activity">
    <reaction evidence="1">
        <text>1-(5-phospho-beta-D-ribosyl)-5-[(5-phospho-beta-D-ribosylamino)methylideneamino]imidazole-4-carboxamide = 5-[(5-phospho-1-deoxy-D-ribulos-1-ylimino)methylamino]-1-(5-phospho-beta-D-ribosyl)imidazole-4-carboxamide</text>
        <dbReference type="Rhea" id="RHEA:15469"/>
        <dbReference type="ChEBI" id="CHEBI:58435"/>
        <dbReference type="ChEBI" id="CHEBI:58525"/>
        <dbReference type="EC" id="5.3.1.16"/>
    </reaction>
</comment>
<comment type="pathway">
    <text evidence="1">Amino-acid biosynthesis; L-histidine biosynthesis; L-histidine from 5-phospho-alpha-D-ribose 1-diphosphate: step 4/9.</text>
</comment>
<comment type="subcellular location">
    <subcellularLocation>
        <location evidence="1">Cytoplasm</location>
    </subcellularLocation>
</comment>
<comment type="similarity">
    <text evidence="1">Belongs to the HisA/HisF family.</text>
</comment>
<feature type="chain" id="PRO_1000135098" description="1-(5-phosphoribosyl)-5-[(5-phosphoribosylamino)methylideneamino] imidazole-4-carboxamide isomerase">
    <location>
        <begin position="1"/>
        <end position="248"/>
    </location>
</feature>
<feature type="active site" description="Proton acceptor" evidence="1">
    <location>
        <position position="8"/>
    </location>
</feature>
<feature type="active site" description="Proton donor" evidence="1">
    <location>
        <position position="131"/>
    </location>
</feature>
<accession>B3R795</accession>
<sequence>MLLIPAIDLKDGQCVRLKQGDMDQATVFSEDPAAMARHWVEQGARRLHLVDLNGAFVGKPRNEAAIKSIIAEVGDEIPVQLGGGIRDLNTIERWLDDGLSYVIIGTAAVKNPGFLKDACSAFGGHIIVGLDAKDGKVATDGWSKLTGHEVADLARKYEDYGVEAIIYTDIGRDGMLQGINIDATVKLAQSMSIPVIASGGLSNLADIDNLCAVEGEGVEGVICGRAIYSGDLNFADAQARADKLRDGQ</sequence>
<organism>
    <name type="scientific">Cupriavidus taiwanensis (strain DSM 17343 / BCRC 17206 / CCUG 44338 / CIP 107171 / LMG 19424 / R1)</name>
    <name type="common">Ralstonia taiwanensis (strain LMG 19424)</name>
    <dbReference type="NCBI Taxonomy" id="977880"/>
    <lineage>
        <taxon>Bacteria</taxon>
        <taxon>Pseudomonadati</taxon>
        <taxon>Pseudomonadota</taxon>
        <taxon>Betaproteobacteria</taxon>
        <taxon>Burkholderiales</taxon>
        <taxon>Burkholderiaceae</taxon>
        <taxon>Cupriavidus</taxon>
    </lineage>
</organism>
<dbReference type="EC" id="5.3.1.16" evidence="1"/>
<dbReference type="EMBL" id="CU633749">
    <property type="protein sequence ID" value="CAQ70795.1"/>
    <property type="molecule type" value="Genomic_DNA"/>
</dbReference>
<dbReference type="RefSeq" id="WP_012354087.1">
    <property type="nucleotide sequence ID" value="NC_010528.1"/>
</dbReference>
<dbReference type="SMR" id="B3R795"/>
<dbReference type="GeneID" id="29763241"/>
<dbReference type="KEGG" id="cti:RALTA_A2870"/>
<dbReference type="eggNOG" id="COG0106">
    <property type="taxonomic scope" value="Bacteria"/>
</dbReference>
<dbReference type="HOGENOM" id="CLU_048577_1_1_4"/>
<dbReference type="BioCyc" id="CTAI977880:RALTA_RS13985-MONOMER"/>
<dbReference type="UniPathway" id="UPA00031">
    <property type="reaction ID" value="UER00009"/>
</dbReference>
<dbReference type="Proteomes" id="UP000001692">
    <property type="component" value="Chromosome 1"/>
</dbReference>
<dbReference type="GO" id="GO:0005737">
    <property type="term" value="C:cytoplasm"/>
    <property type="evidence" value="ECO:0007669"/>
    <property type="project" value="UniProtKB-SubCell"/>
</dbReference>
<dbReference type="GO" id="GO:0003949">
    <property type="term" value="F:1-(5-phosphoribosyl)-5-[(5-phosphoribosylamino)methylideneamino]imidazole-4-carboxamide isomerase activity"/>
    <property type="evidence" value="ECO:0007669"/>
    <property type="project" value="UniProtKB-UniRule"/>
</dbReference>
<dbReference type="GO" id="GO:0000105">
    <property type="term" value="P:L-histidine biosynthetic process"/>
    <property type="evidence" value="ECO:0007669"/>
    <property type="project" value="UniProtKB-UniRule"/>
</dbReference>
<dbReference type="GO" id="GO:0000162">
    <property type="term" value="P:L-tryptophan biosynthetic process"/>
    <property type="evidence" value="ECO:0007669"/>
    <property type="project" value="TreeGrafter"/>
</dbReference>
<dbReference type="CDD" id="cd04732">
    <property type="entry name" value="HisA"/>
    <property type="match status" value="1"/>
</dbReference>
<dbReference type="FunFam" id="3.20.20.70:FF:000009">
    <property type="entry name" value="1-(5-phosphoribosyl)-5-[(5-phosphoribosylamino)methylideneamino] imidazole-4-carboxamide isomerase"/>
    <property type="match status" value="1"/>
</dbReference>
<dbReference type="Gene3D" id="3.20.20.70">
    <property type="entry name" value="Aldolase class I"/>
    <property type="match status" value="1"/>
</dbReference>
<dbReference type="HAMAP" id="MF_01014">
    <property type="entry name" value="HisA"/>
    <property type="match status" value="1"/>
</dbReference>
<dbReference type="InterPro" id="IPR013785">
    <property type="entry name" value="Aldolase_TIM"/>
</dbReference>
<dbReference type="InterPro" id="IPR006062">
    <property type="entry name" value="His_biosynth"/>
</dbReference>
<dbReference type="InterPro" id="IPR006063">
    <property type="entry name" value="HisA_bact_arch"/>
</dbReference>
<dbReference type="InterPro" id="IPR044524">
    <property type="entry name" value="Isoase_HisA-like"/>
</dbReference>
<dbReference type="InterPro" id="IPR023016">
    <property type="entry name" value="Isoase_HisA-like_bact"/>
</dbReference>
<dbReference type="InterPro" id="IPR011060">
    <property type="entry name" value="RibuloseP-bd_barrel"/>
</dbReference>
<dbReference type="NCBIfam" id="TIGR00007">
    <property type="entry name" value="1-(5-phosphoribosyl)-5-[(5-phosphoribosylamino)methylideneamino]imidazole-4-carboxamide isomerase"/>
    <property type="match status" value="1"/>
</dbReference>
<dbReference type="NCBIfam" id="NF010112">
    <property type="entry name" value="PRK13585.1"/>
    <property type="match status" value="1"/>
</dbReference>
<dbReference type="PANTHER" id="PTHR43090">
    <property type="entry name" value="1-(5-PHOSPHORIBOSYL)-5-[(5-PHOSPHORIBOSYLAMINO)METHYLIDENEAMINO] IMIDAZOLE-4-CARBOXAMIDE ISOMERASE"/>
    <property type="match status" value="1"/>
</dbReference>
<dbReference type="PANTHER" id="PTHR43090:SF2">
    <property type="entry name" value="1-(5-PHOSPHORIBOSYL)-5-[(5-PHOSPHORIBOSYLAMINO)METHYLIDENEAMINO] IMIDAZOLE-4-CARBOXAMIDE ISOMERASE"/>
    <property type="match status" value="1"/>
</dbReference>
<dbReference type="Pfam" id="PF00977">
    <property type="entry name" value="His_biosynth"/>
    <property type="match status" value="1"/>
</dbReference>
<dbReference type="SUPFAM" id="SSF51366">
    <property type="entry name" value="Ribulose-phoshate binding barrel"/>
    <property type="match status" value="1"/>
</dbReference>
<protein>
    <recommendedName>
        <fullName evidence="1">1-(5-phosphoribosyl)-5-[(5-phosphoribosylamino)methylideneamino] imidazole-4-carboxamide isomerase</fullName>
        <ecNumber evidence="1">5.3.1.16</ecNumber>
    </recommendedName>
    <alternativeName>
        <fullName evidence="1">Phosphoribosylformimino-5-aminoimidazole carboxamide ribotide isomerase</fullName>
    </alternativeName>
</protein>
<reference key="1">
    <citation type="journal article" date="2008" name="Genome Res.">
        <title>Genome sequence of the beta-rhizobium Cupriavidus taiwanensis and comparative genomics of rhizobia.</title>
        <authorList>
            <person name="Amadou C."/>
            <person name="Pascal G."/>
            <person name="Mangenot S."/>
            <person name="Glew M."/>
            <person name="Bontemps C."/>
            <person name="Capela D."/>
            <person name="Carrere S."/>
            <person name="Cruveiller S."/>
            <person name="Dossat C."/>
            <person name="Lajus A."/>
            <person name="Marchetti M."/>
            <person name="Poinsot V."/>
            <person name="Rouy Z."/>
            <person name="Servin B."/>
            <person name="Saad M."/>
            <person name="Schenowitz C."/>
            <person name="Barbe V."/>
            <person name="Batut J."/>
            <person name="Medigue C."/>
            <person name="Masson-Boivin C."/>
        </authorList>
    </citation>
    <scope>NUCLEOTIDE SEQUENCE [LARGE SCALE GENOMIC DNA]</scope>
    <source>
        <strain>DSM 17343 / BCRC 17206 / CCUG 44338 / CIP 107171 / LMG 19424 / R1</strain>
    </source>
</reference>
<name>HIS4_CUPTR</name>